<gene>
    <name type="primary">ASZ1</name>
    <name type="synonym">GASZ</name>
</gene>
<organism>
    <name type="scientific">Loxodonta africana</name>
    <name type="common">African elephant</name>
    <dbReference type="NCBI Taxonomy" id="9785"/>
    <lineage>
        <taxon>Eukaryota</taxon>
        <taxon>Metazoa</taxon>
        <taxon>Chordata</taxon>
        <taxon>Craniata</taxon>
        <taxon>Vertebrata</taxon>
        <taxon>Euteleostomi</taxon>
        <taxon>Mammalia</taxon>
        <taxon>Eutheria</taxon>
        <taxon>Afrotheria</taxon>
        <taxon>Proboscidea</taxon>
        <taxon>Elephantidae</taxon>
        <taxon>Loxodonta</taxon>
    </lineage>
</organism>
<protein>
    <recommendedName>
        <fullName>Ankyrin repeat, SAM and basic leucine zipper domain-containing protein 1</fullName>
    </recommendedName>
    <alternativeName>
        <fullName>Germ cell-specific ankyrin, SAM and basic leucine zipper domain-containing protein</fullName>
    </alternativeName>
</protein>
<name>ASZ1_LOXAF</name>
<sequence length="475" mass="52806">MAAAVQRGLPVAGGGESSESEDDGWEIGYLDRASQKLTSPLPTEEKNEIFKKALTTGDISLVEELLDSGISVESSFRYGWTPLMYAASVANVELVRVLLDRGANASFEKDKHTVLITACSARGSQEQILKCVELLLSRNADPNVACRRLMTPIMYAARDGHPQVVALLVAQGAEVNAQDENGYTALTWAARQGHKNVVLKLLELGANKMLQTKDGKTPSEVANKNKHPEIFSLLSLTLNPLEGKLQQLTKEETICKLLTTDSDKEKDYIFSSYAAFGDLEIFLYGLGLEHMTDLLKERDISLRHLLTMRKDEFSKNGIASRDQQKILAALKELAVEEIKFGELPEVAKLEISGDEFLSFLLKLNKQCGHLITAVQNIITELPVSSHKIVLEWASPQNFTSVCEELVSNVEDLSEEVCKLKDLIQKLQNERENDPTHIPSVEEASPWRSRILKRTAVTVCGFGFLLFICKLTFQRK</sequence>
<proteinExistence type="inferred from homology"/>
<feature type="chain" id="PRO_0000250461" description="Ankyrin repeat, SAM and basic leucine zipper domain-containing protein 1">
    <location>
        <begin position="1"/>
        <end position="475"/>
    </location>
</feature>
<feature type="repeat" description="ANK 1">
    <location>
        <begin position="45"/>
        <end position="74"/>
    </location>
</feature>
<feature type="repeat" description="ANK 2">
    <location>
        <begin position="78"/>
        <end position="107"/>
    </location>
</feature>
<feature type="repeat" description="ANK 3">
    <location>
        <begin position="110"/>
        <end position="144"/>
    </location>
</feature>
<feature type="repeat" description="ANK 4">
    <location>
        <begin position="148"/>
        <end position="177"/>
    </location>
</feature>
<feature type="repeat" description="ANK 5">
    <location>
        <begin position="181"/>
        <end position="210"/>
    </location>
</feature>
<feature type="repeat" description="ANK 6">
    <location>
        <begin position="214"/>
        <end position="243"/>
    </location>
</feature>
<feature type="domain" description="SAM">
    <location>
        <begin position="272"/>
        <end position="334"/>
    </location>
</feature>
<feature type="region of interest" description="Disordered" evidence="3">
    <location>
        <begin position="1"/>
        <end position="24"/>
    </location>
</feature>
<feature type="modified residue" description="Phosphoserine" evidence="2">
    <location>
        <position position="17"/>
    </location>
</feature>
<feature type="modified residue" description="Phosphoserine" evidence="2">
    <location>
        <position position="18"/>
    </location>
</feature>
<feature type="modified residue" description="Phosphoserine" evidence="2">
    <location>
        <position position="20"/>
    </location>
</feature>
<dbReference type="EMBL" id="DP000087">
    <property type="protein sequence ID" value="ABG66651.1"/>
    <property type="molecule type" value="Genomic_DNA"/>
</dbReference>
<dbReference type="SMR" id="Q108U1"/>
<dbReference type="FunCoup" id="Q108U1">
    <property type="interactions" value="8"/>
</dbReference>
<dbReference type="STRING" id="9785.ENSLAFP00000004818"/>
<dbReference type="eggNOG" id="KOG0504">
    <property type="taxonomic scope" value="Eukaryota"/>
</dbReference>
<dbReference type="InParanoid" id="Q108U1"/>
<dbReference type="Proteomes" id="UP000007646">
    <property type="component" value="Unassembled WGS sequence"/>
</dbReference>
<dbReference type="GO" id="GO:0071546">
    <property type="term" value="C:pi-body"/>
    <property type="evidence" value="ECO:0000250"/>
    <property type="project" value="UniProtKB"/>
</dbReference>
<dbReference type="GO" id="GO:0030154">
    <property type="term" value="P:cell differentiation"/>
    <property type="evidence" value="ECO:0007669"/>
    <property type="project" value="UniProtKB-KW"/>
</dbReference>
<dbReference type="GO" id="GO:0007140">
    <property type="term" value="P:male meiotic nuclear division"/>
    <property type="evidence" value="ECO:0000250"/>
    <property type="project" value="UniProtKB"/>
</dbReference>
<dbReference type="GO" id="GO:0031047">
    <property type="term" value="P:regulatory ncRNA-mediated gene silencing"/>
    <property type="evidence" value="ECO:0007669"/>
    <property type="project" value="UniProtKB-KW"/>
</dbReference>
<dbReference type="GO" id="GO:0007283">
    <property type="term" value="P:spermatogenesis"/>
    <property type="evidence" value="ECO:0000250"/>
    <property type="project" value="UniProtKB"/>
</dbReference>
<dbReference type="GO" id="GO:0010526">
    <property type="term" value="P:transposable element silencing"/>
    <property type="evidence" value="ECO:0000250"/>
    <property type="project" value="UniProtKB"/>
</dbReference>
<dbReference type="CDD" id="cd09521">
    <property type="entry name" value="SAM_ASZ1"/>
    <property type="match status" value="1"/>
</dbReference>
<dbReference type="FunFam" id="1.25.40.20:FF:000192">
    <property type="entry name" value="Ankyrin repeat, SAM and basic leucine zipper domain-containing 1"/>
    <property type="match status" value="1"/>
</dbReference>
<dbReference type="FunFam" id="1.10.150.50:FF:000060">
    <property type="entry name" value="Ankyrin repeat, SAM and basic leucine zipper domain-containing protein 1"/>
    <property type="match status" value="1"/>
</dbReference>
<dbReference type="Gene3D" id="1.25.40.20">
    <property type="entry name" value="Ankyrin repeat-containing domain"/>
    <property type="match status" value="2"/>
</dbReference>
<dbReference type="Gene3D" id="1.10.150.50">
    <property type="entry name" value="Transcription Factor, Ets-1"/>
    <property type="match status" value="1"/>
</dbReference>
<dbReference type="InterPro" id="IPR002110">
    <property type="entry name" value="Ankyrin_rpt"/>
</dbReference>
<dbReference type="InterPro" id="IPR036770">
    <property type="entry name" value="Ankyrin_rpt-contain_sf"/>
</dbReference>
<dbReference type="InterPro" id="IPR042650">
    <property type="entry name" value="Asz1_SAM"/>
</dbReference>
<dbReference type="InterPro" id="IPR001660">
    <property type="entry name" value="SAM"/>
</dbReference>
<dbReference type="InterPro" id="IPR013761">
    <property type="entry name" value="SAM/pointed_sf"/>
</dbReference>
<dbReference type="PANTHER" id="PTHR24157">
    <property type="entry name" value="ANKYRIN REPEAT, SAM AND BASIC LEUCINE ZIPPER DOMAIN-CONTAINING PROTEIN 1"/>
    <property type="match status" value="1"/>
</dbReference>
<dbReference type="PANTHER" id="PTHR24157:SF3">
    <property type="entry name" value="ANKYRIN REPEAT, SAM AND BASIC LEUCINE ZIPPER DOMAIN-CONTAINING PROTEIN 1"/>
    <property type="match status" value="1"/>
</dbReference>
<dbReference type="Pfam" id="PF00023">
    <property type="entry name" value="Ank"/>
    <property type="match status" value="1"/>
</dbReference>
<dbReference type="Pfam" id="PF12796">
    <property type="entry name" value="Ank_2"/>
    <property type="match status" value="1"/>
</dbReference>
<dbReference type="Pfam" id="PF07647">
    <property type="entry name" value="SAM_2"/>
    <property type="match status" value="1"/>
</dbReference>
<dbReference type="PRINTS" id="PR01415">
    <property type="entry name" value="ANKYRIN"/>
</dbReference>
<dbReference type="SMART" id="SM00248">
    <property type="entry name" value="ANK"/>
    <property type="match status" value="5"/>
</dbReference>
<dbReference type="SUPFAM" id="SSF48403">
    <property type="entry name" value="Ankyrin repeat"/>
    <property type="match status" value="1"/>
</dbReference>
<dbReference type="SUPFAM" id="SSF140860">
    <property type="entry name" value="Pseudo ankyrin repeat-like"/>
    <property type="match status" value="1"/>
</dbReference>
<dbReference type="PROSITE" id="PS50297">
    <property type="entry name" value="ANK_REP_REGION"/>
    <property type="match status" value="1"/>
</dbReference>
<dbReference type="PROSITE" id="PS50088">
    <property type="entry name" value="ANK_REPEAT"/>
    <property type="match status" value="3"/>
</dbReference>
<comment type="function">
    <text evidence="1">Plays a central role during spermatogenesis by repressing transposable elements and preventing their mobilization, which is essential for the germline integrity. Acts via the piRNA metabolic process, which mediates the repression of transposable elements during meiosis by forming complexes composed of piRNAs and Piwi proteins and governs the methylation and subsequent repression of transposons. Its association with pi-bodies suggests a participation in the primary piRNAs metabolic process. Required prior to the pachytene stage to facilitate the production of multiple types of piRNAs, including those associated with repeats involved in the regulation of retrotransposons. May act by mediating protein-protein interactions during germ cell maturation (By similarity).</text>
</comment>
<comment type="subunit">
    <text evidence="1">Interacts with DDX4, PIWIL1, RANBP9 and TDRD1.</text>
</comment>
<comment type="subcellular location">
    <subcellularLocation>
        <location evidence="1">Cytoplasm</location>
    </subcellularLocation>
    <text evidence="1">Component of the meiotic nuage, also named P granule, a germ-cell-specific organelle required to repress transposon activity during meiosis. Specifically localizes to pi-bodies, a subset of the nuage which contains primary piRNAs (By similarity).</text>
</comment>
<reference key="1">
    <citation type="submission" date="2006-07" db="EMBL/GenBank/DDBJ databases">
        <title>NISC comparative sequencing initiative.</title>
        <authorList>
            <person name="Antonellis A."/>
            <person name="Ayele K."/>
            <person name="Benjamin B."/>
            <person name="Blakesley R.W."/>
            <person name="Boakye A."/>
            <person name="Bouffard G.G."/>
            <person name="Brinkley C."/>
            <person name="Brooks S."/>
            <person name="Chu G."/>
            <person name="Coleman H."/>
            <person name="Engle J."/>
            <person name="Gestole M."/>
            <person name="Greene A."/>
            <person name="Guan X."/>
            <person name="Gupta J."/>
            <person name="Haghighi P."/>
            <person name="Han J."/>
            <person name="Hansen N."/>
            <person name="Ho S.-L."/>
            <person name="Hu P."/>
            <person name="Hunter G."/>
            <person name="Hurle B."/>
            <person name="Idol J.R."/>
            <person name="Kwong P."/>
            <person name="Laric P."/>
            <person name="Larson S."/>
            <person name="Lee-Lin S.-Q."/>
            <person name="Legaspi R."/>
            <person name="Madden M."/>
            <person name="Maduro Q.L."/>
            <person name="Maduro V.B."/>
            <person name="Margulies E.H."/>
            <person name="Masiello C."/>
            <person name="Maskeri B."/>
            <person name="McDowell J."/>
            <person name="Mojidi H.A."/>
            <person name="Mullikin J.C."/>
            <person name="Oestreicher J.S."/>
            <person name="Park M."/>
            <person name="Portnoy M.E."/>
            <person name="Prasad A."/>
            <person name="Puri O."/>
            <person name="Reddix-Dugue N."/>
            <person name="Schandler K."/>
            <person name="Schueler M.G."/>
            <person name="Sison C."/>
            <person name="Stantripop S."/>
            <person name="Stephen E."/>
            <person name="Taye A."/>
            <person name="Thomas J.W."/>
            <person name="Thomas P.J."/>
            <person name="Tsipouri V."/>
            <person name="Ung L."/>
            <person name="Vogt J.L."/>
            <person name="Wetherby K.D."/>
            <person name="Young A."/>
            <person name="Green E.D."/>
        </authorList>
    </citation>
    <scope>NUCLEOTIDE SEQUENCE [LARGE SCALE GENOMIC DNA]</scope>
</reference>
<evidence type="ECO:0000250" key="1"/>
<evidence type="ECO:0000250" key="2">
    <source>
        <dbReference type="UniProtKB" id="Q8VD46"/>
    </source>
</evidence>
<evidence type="ECO:0000256" key="3">
    <source>
        <dbReference type="SAM" id="MobiDB-lite"/>
    </source>
</evidence>
<keyword id="KW-0040">ANK repeat</keyword>
<keyword id="KW-0963">Cytoplasm</keyword>
<keyword id="KW-0217">Developmental protein</keyword>
<keyword id="KW-0221">Differentiation</keyword>
<keyword id="KW-0469">Meiosis</keyword>
<keyword id="KW-0597">Phosphoprotein</keyword>
<keyword id="KW-1185">Reference proteome</keyword>
<keyword id="KW-0677">Repeat</keyword>
<keyword id="KW-0943">RNA-mediated gene silencing</keyword>
<keyword id="KW-0744">Spermatogenesis</keyword>
<accession>Q108U1</accession>